<gene>
    <name evidence="1" type="primary">argS</name>
    <name type="ordered locus">BDU_595</name>
</gene>
<reference key="1">
    <citation type="journal article" date="2008" name="PLoS Genet.">
        <title>The genome of Borrelia recurrentis, the agent of deadly louse-borne relapsing fever, is a degraded subset of tick-borne Borrelia duttonii.</title>
        <authorList>
            <person name="Lescot M."/>
            <person name="Audic S."/>
            <person name="Robert C."/>
            <person name="Nguyen T.T."/>
            <person name="Blanc G."/>
            <person name="Cutler S.J."/>
            <person name="Wincker P."/>
            <person name="Couloux A."/>
            <person name="Claverie J.-M."/>
            <person name="Raoult D."/>
            <person name="Drancourt M."/>
        </authorList>
    </citation>
    <scope>NUCLEOTIDE SEQUENCE [LARGE SCALE GENOMIC DNA]</scope>
    <source>
        <strain>Ly</strain>
    </source>
</reference>
<evidence type="ECO:0000255" key="1">
    <source>
        <dbReference type="HAMAP-Rule" id="MF_00123"/>
    </source>
</evidence>
<feature type="chain" id="PRO_1000095335" description="Arginine--tRNA ligase">
    <location>
        <begin position="1"/>
        <end position="585"/>
    </location>
</feature>
<feature type="short sequence motif" description="'HIGH' region">
    <location>
        <begin position="127"/>
        <end position="137"/>
    </location>
</feature>
<accession>B5RME6</accession>
<comment type="catalytic activity">
    <reaction evidence="1">
        <text>tRNA(Arg) + L-arginine + ATP = L-arginyl-tRNA(Arg) + AMP + diphosphate</text>
        <dbReference type="Rhea" id="RHEA:20301"/>
        <dbReference type="Rhea" id="RHEA-COMP:9658"/>
        <dbReference type="Rhea" id="RHEA-COMP:9673"/>
        <dbReference type="ChEBI" id="CHEBI:30616"/>
        <dbReference type="ChEBI" id="CHEBI:32682"/>
        <dbReference type="ChEBI" id="CHEBI:33019"/>
        <dbReference type="ChEBI" id="CHEBI:78442"/>
        <dbReference type="ChEBI" id="CHEBI:78513"/>
        <dbReference type="ChEBI" id="CHEBI:456215"/>
        <dbReference type="EC" id="6.1.1.19"/>
    </reaction>
</comment>
<comment type="subunit">
    <text evidence="1">Monomer.</text>
</comment>
<comment type="subcellular location">
    <subcellularLocation>
        <location evidence="1">Cytoplasm</location>
    </subcellularLocation>
</comment>
<comment type="similarity">
    <text evidence="1">Belongs to the class-I aminoacyl-tRNA synthetase family.</text>
</comment>
<sequence>MIKTIKADLKNKIQKTIKELALSSNIKLDKINIVMQKPPKSEMGDLSILIFEFSKILKLSIPVITQEIIKQIGNEYKTKSMGPYLNIKFNRKEYIQNTIKKVNKEKENYGANNSLQNKKTIIEFSSPNTNKPLHVGHLRNDIIGESLSRILKASGSKVTKINLINDRGTHICKSMLAYKKFGNNITPEIAQKKGDHLIGDFYVKYNEYASQNSEIAENEIQQLLCQWEQGDEKTVQLWTKLNKWAIDGIKETYNTTNITFDKIYLESEIFKIGREVVINGLKEGLCYKREDGAICINIPTEKNNIDNQNFKQKVLLRANGTSIYLTQDLGNIVARKNEFDFDEMIYVVGSEQIHHFKTLFYVADKLGVTNENNLIHLSYGMVNLPEGKMKSREGNIIDADNLIHDLSQSTMLELKKRYENEQNLQKLALNISLGAIHYYLLKTAIHKDILFNKTESLSFTGNSGPYIQYVGARINSILDKYNNLNLANKNTNFDLLVNENEWEIIKIISEFEEYIIKASKDRNPSIIANYSYLLAKNFSTYYQDTKIIDKDNLELTHARIDLAKAVLQTIKNCMHLLNIPYIQKM</sequence>
<protein>
    <recommendedName>
        <fullName evidence="1">Arginine--tRNA ligase</fullName>
        <ecNumber evidence="1">6.1.1.19</ecNumber>
    </recommendedName>
    <alternativeName>
        <fullName evidence="1">Arginyl-tRNA synthetase</fullName>
        <shortName evidence="1">ArgRS</shortName>
    </alternativeName>
</protein>
<keyword id="KW-0030">Aminoacyl-tRNA synthetase</keyword>
<keyword id="KW-0067">ATP-binding</keyword>
<keyword id="KW-0963">Cytoplasm</keyword>
<keyword id="KW-0436">Ligase</keyword>
<keyword id="KW-0547">Nucleotide-binding</keyword>
<keyword id="KW-0648">Protein biosynthesis</keyword>
<proteinExistence type="inferred from homology"/>
<name>SYR_BORDL</name>
<dbReference type="EC" id="6.1.1.19" evidence="1"/>
<dbReference type="EMBL" id="CP000976">
    <property type="protein sequence ID" value="ACH93532.1"/>
    <property type="molecule type" value="Genomic_DNA"/>
</dbReference>
<dbReference type="RefSeq" id="WP_012538341.1">
    <property type="nucleotide sequence ID" value="NC_011229.1"/>
</dbReference>
<dbReference type="SMR" id="B5RME6"/>
<dbReference type="STRING" id="412419.BDU_595"/>
<dbReference type="KEGG" id="bdu:BDU_595"/>
<dbReference type="eggNOG" id="COG0018">
    <property type="taxonomic scope" value="Bacteria"/>
</dbReference>
<dbReference type="HOGENOM" id="CLU_006406_6_1_12"/>
<dbReference type="OrthoDB" id="9805987at2"/>
<dbReference type="Proteomes" id="UP000000611">
    <property type="component" value="Chromosome"/>
</dbReference>
<dbReference type="GO" id="GO:0005737">
    <property type="term" value="C:cytoplasm"/>
    <property type="evidence" value="ECO:0007669"/>
    <property type="project" value="UniProtKB-SubCell"/>
</dbReference>
<dbReference type="GO" id="GO:0004814">
    <property type="term" value="F:arginine-tRNA ligase activity"/>
    <property type="evidence" value="ECO:0007669"/>
    <property type="project" value="UniProtKB-UniRule"/>
</dbReference>
<dbReference type="GO" id="GO:0005524">
    <property type="term" value="F:ATP binding"/>
    <property type="evidence" value="ECO:0007669"/>
    <property type="project" value="UniProtKB-UniRule"/>
</dbReference>
<dbReference type="GO" id="GO:0006420">
    <property type="term" value="P:arginyl-tRNA aminoacylation"/>
    <property type="evidence" value="ECO:0007669"/>
    <property type="project" value="UniProtKB-UniRule"/>
</dbReference>
<dbReference type="CDD" id="cd00671">
    <property type="entry name" value="ArgRS_core"/>
    <property type="match status" value="1"/>
</dbReference>
<dbReference type="FunFam" id="1.10.730.10:FF:000006">
    <property type="entry name" value="Arginyl-tRNA synthetase 2, mitochondrial"/>
    <property type="match status" value="1"/>
</dbReference>
<dbReference type="Gene3D" id="3.30.1360.70">
    <property type="entry name" value="Arginyl tRNA synthetase N-terminal domain"/>
    <property type="match status" value="1"/>
</dbReference>
<dbReference type="Gene3D" id="3.40.50.620">
    <property type="entry name" value="HUPs"/>
    <property type="match status" value="1"/>
</dbReference>
<dbReference type="Gene3D" id="1.10.730.10">
    <property type="entry name" value="Isoleucyl-tRNA Synthetase, Domain 1"/>
    <property type="match status" value="1"/>
</dbReference>
<dbReference type="HAMAP" id="MF_00123">
    <property type="entry name" value="Arg_tRNA_synth"/>
    <property type="match status" value="1"/>
</dbReference>
<dbReference type="InterPro" id="IPR001412">
    <property type="entry name" value="aa-tRNA-synth_I_CS"/>
</dbReference>
<dbReference type="InterPro" id="IPR001278">
    <property type="entry name" value="Arg-tRNA-ligase"/>
</dbReference>
<dbReference type="InterPro" id="IPR005148">
    <property type="entry name" value="Arg-tRNA-synth_N"/>
</dbReference>
<dbReference type="InterPro" id="IPR036695">
    <property type="entry name" value="Arg-tRNA-synth_N_sf"/>
</dbReference>
<dbReference type="InterPro" id="IPR035684">
    <property type="entry name" value="ArgRS_core"/>
</dbReference>
<dbReference type="InterPro" id="IPR008909">
    <property type="entry name" value="DALR_anticod-bd"/>
</dbReference>
<dbReference type="InterPro" id="IPR014729">
    <property type="entry name" value="Rossmann-like_a/b/a_fold"/>
</dbReference>
<dbReference type="InterPro" id="IPR009080">
    <property type="entry name" value="tRNAsynth_Ia_anticodon-bd"/>
</dbReference>
<dbReference type="NCBIfam" id="TIGR00456">
    <property type="entry name" value="argS"/>
    <property type="match status" value="1"/>
</dbReference>
<dbReference type="PANTHER" id="PTHR11956:SF5">
    <property type="entry name" value="ARGININE--TRNA LIGASE, CYTOPLASMIC"/>
    <property type="match status" value="1"/>
</dbReference>
<dbReference type="PANTHER" id="PTHR11956">
    <property type="entry name" value="ARGINYL-TRNA SYNTHETASE"/>
    <property type="match status" value="1"/>
</dbReference>
<dbReference type="Pfam" id="PF03485">
    <property type="entry name" value="Arg_tRNA_synt_N"/>
    <property type="match status" value="1"/>
</dbReference>
<dbReference type="Pfam" id="PF05746">
    <property type="entry name" value="DALR_1"/>
    <property type="match status" value="1"/>
</dbReference>
<dbReference type="Pfam" id="PF00750">
    <property type="entry name" value="tRNA-synt_1d"/>
    <property type="match status" value="1"/>
</dbReference>
<dbReference type="PRINTS" id="PR01038">
    <property type="entry name" value="TRNASYNTHARG"/>
</dbReference>
<dbReference type="SMART" id="SM01016">
    <property type="entry name" value="Arg_tRNA_synt_N"/>
    <property type="match status" value="1"/>
</dbReference>
<dbReference type="SMART" id="SM00836">
    <property type="entry name" value="DALR_1"/>
    <property type="match status" value="1"/>
</dbReference>
<dbReference type="SUPFAM" id="SSF47323">
    <property type="entry name" value="Anticodon-binding domain of a subclass of class I aminoacyl-tRNA synthetases"/>
    <property type="match status" value="1"/>
</dbReference>
<dbReference type="SUPFAM" id="SSF55190">
    <property type="entry name" value="Arginyl-tRNA synthetase (ArgRS), N-terminal 'additional' domain"/>
    <property type="match status" value="1"/>
</dbReference>
<dbReference type="SUPFAM" id="SSF52374">
    <property type="entry name" value="Nucleotidylyl transferase"/>
    <property type="match status" value="1"/>
</dbReference>
<dbReference type="PROSITE" id="PS00178">
    <property type="entry name" value="AA_TRNA_LIGASE_I"/>
    <property type="match status" value="1"/>
</dbReference>
<organism>
    <name type="scientific">Borrelia duttonii (strain Ly)</name>
    <dbReference type="NCBI Taxonomy" id="412419"/>
    <lineage>
        <taxon>Bacteria</taxon>
        <taxon>Pseudomonadati</taxon>
        <taxon>Spirochaetota</taxon>
        <taxon>Spirochaetia</taxon>
        <taxon>Spirochaetales</taxon>
        <taxon>Borreliaceae</taxon>
        <taxon>Borrelia</taxon>
    </lineage>
</organism>